<comment type="function">
    <text evidence="1">Catalyzes the thiamine diphosphate-dependent decarboxylation of 2-oxoglutarate and the subsequent addition of the resulting succinic semialdehyde-thiamine pyrophosphate anion to isochorismate to yield 2-succinyl-5-enolpyruvyl-6-hydroxy-3-cyclohexene-1-carboxylate (SEPHCHC).</text>
</comment>
<comment type="catalytic activity">
    <reaction evidence="1">
        <text>isochorismate + 2-oxoglutarate + H(+) = 5-enolpyruvoyl-6-hydroxy-2-succinyl-cyclohex-3-ene-1-carboxylate + CO2</text>
        <dbReference type="Rhea" id="RHEA:25593"/>
        <dbReference type="ChEBI" id="CHEBI:15378"/>
        <dbReference type="ChEBI" id="CHEBI:16526"/>
        <dbReference type="ChEBI" id="CHEBI:16810"/>
        <dbReference type="ChEBI" id="CHEBI:29780"/>
        <dbReference type="ChEBI" id="CHEBI:58818"/>
        <dbReference type="EC" id="2.2.1.9"/>
    </reaction>
</comment>
<comment type="cofactor">
    <cofactor evidence="1">
        <name>Mg(2+)</name>
        <dbReference type="ChEBI" id="CHEBI:18420"/>
    </cofactor>
    <cofactor evidence="1">
        <name>Mn(2+)</name>
        <dbReference type="ChEBI" id="CHEBI:29035"/>
    </cofactor>
</comment>
<comment type="cofactor">
    <cofactor evidence="1">
        <name>thiamine diphosphate</name>
        <dbReference type="ChEBI" id="CHEBI:58937"/>
    </cofactor>
    <text evidence="1">Binds 1 thiamine pyrophosphate per subunit.</text>
</comment>
<comment type="pathway">
    <text evidence="1">Quinol/quinone metabolism; 1,4-dihydroxy-2-naphthoate biosynthesis; 1,4-dihydroxy-2-naphthoate from chorismate: step 2/7.</text>
</comment>
<comment type="pathway">
    <text evidence="1">Quinol/quinone metabolism; menaquinone biosynthesis.</text>
</comment>
<comment type="subunit">
    <text evidence="1">Homodimer.</text>
</comment>
<comment type="similarity">
    <text evidence="1">Belongs to the TPP enzyme family. MenD subfamily.</text>
</comment>
<feature type="chain" id="PRO_1000187102" description="2-succinyl-5-enolpyruvyl-6-hydroxy-3-cyclohexene-1-carboxylate synthase">
    <location>
        <begin position="1"/>
        <end position="567"/>
    </location>
</feature>
<organism>
    <name type="scientific">Yersinia pestis bv. Antiqua (strain Angola)</name>
    <dbReference type="NCBI Taxonomy" id="349746"/>
    <lineage>
        <taxon>Bacteria</taxon>
        <taxon>Pseudomonadati</taxon>
        <taxon>Pseudomonadota</taxon>
        <taxon>Gammaproteobacteria</taxon>
        <taxon>Enterobacterales</taxon>
        <taxon>Yersiniaceae</taxon>
        <taxon>Yersinia</taxon>
    </lineage>
</organism>
<reference key="1">
    <citation type="journal article" date="2010" name="J. Bacteriol.">
        <title>Genome sequence of the deep-rooted Yersinia pestis strain Angola reveals new insights into the evolution and pangenome of the plague bacterium.</title>
        <authorList>
            <person name="Eppinger M."/>
            <person name="Worsham P.L."/>
            <person name="Nikolich M.P."/>
            <person name="Riley D.R."/>
            <person name="Sebastian Y."/>
            <person name="Mou S."/>
            <person name="Achtman M."/>
            <person name="Lindler L.E."/>
            <person name="Ravel J."/>
        </authorList>
    </citation>
    <scope>NUCLEOTIDE SEQUENCE [LARGE SCALE GENOMIC DNA]</scope>
    <source>
        <strain>Angola</strain>
    </source>
</reference>
<protein>
    <recommendedName>
        <fullName evidence="1">2-succinyl-5-enolpyruvyl-6-hydroxy-3-cyclohexene-1-carboxylate synthase</fullName>
        <shortName evidence="1">SEPHCHC synthase</shortName>
        <ecNumber evidence="1">2.2.1.9</ecNumber>
    </recommendedName>
    <alternativeName>
        <fullName evidence="1">Menaquinone biosynthesis protein MenD</fullName>
    </alternativeName>
</protein>
<proteinExistence type="inferred from homology"/>
<dbReference type="EC" id="2.2.1.9" evidence="1"/>
<dbReference type="EMBL" id="CP000901">
    <property type="protein sequence ID" value="ABX87791.1"/>
    <property type="molecule type" value="Genomic_DNA"/>
</dbReference>
<dbReference type="RefSeq" id="WP_002230974.1">
    <property type="nucleotide sequence ID" value="NZ_CP009935.1"/>
</dbReference>
<dbReference type="SMR" id="A9R6J0"/>
<dbReference type="KEGG" id="ypg:YpAngola_A1785"/>
<dbReference type="PATRIC" id="fig|349746.12.peg.2759"/>
<dbReference type="UniPathway" id="UPA00079"/>
<dbReference type="UniPathway" id="UPA01057">
    <property type="reaction ID" value="UER00164"/>
</dbReference>
<dbReference type="GO" id="GO:0070204">
    <property type="term" value="F:2-succinyl-5-enolpyruvyl-6-hydroxy-3-cyclohexene-1-carboxylic-acid synthase activity"/>
    <property type="evidence" value="ECO:0007669"/>
    <property type="project" value="UniProtKB-UniRule"/>
</dbReference>
<dbReference type="GO" id="GO:0000287">
    <property type="term" value="F:magnesium ion binding"/>
    <property type="evidence" value="ECO:0007669"/>
    <property type="project" value="UniProtKB-UniRule"/>
</dbReference>
<dbReference type="GO" id="GO:0030145">
    <property type="term" value="F:manganese ion binding"/>
    <property type="evidence" value="ECO:0007669"/>
    <property type="project" value="UniProtKB-UniRule"/>
</dbReference>
<dbReference type="GO" id="GO:0030976">
    <property type="term" value="F:thiamine pyrophosphate binding"/>
    <property type="evidence" value="ECO:0007669"/>
    <property type="project" value="UniProtKB-UniRule"/>
</dbReference>
<dbReference type="GO" id="GO:0009234">
    <property type="term" value="P:menaquinone biosynthetic process"/>
    <property type="evidence" value="ECO:0007669"/>
    <property type="project" value="UniProtKB-UniRule"/>
</dbReference>
<dbReference type="CDD" id="cd07037">
    <property type="entry name" value="TPP_PYR_MenD"/>
    <property type="match status" value="1"/>
</dbReference>
<dbReference type="CDD" id="cd02009">
    <property type="entry name" value="TPP_SHCHC_synthase"/>
    <property type="match status" value="1"/>
</dbReference>
<dbReference type="FunFam" id="3.40.50.970:FF:000029">
    <property type="entry name" value="2-succinyl-5-enolpyruvyl-6-hydroxy-3-cyclohexene-1-carboxylate synthase"/>
    <property type="match status" value="1"/>
</dbReference>
<dbReference type="Gene3D" id="3.40.50.970">
    <property type="match status" value="2"/>
</dbReference>
<dbReference type="Gene3D" id="3.40.50.1220">
    <property type="entry name" value="TPP-binding domain"/>
    <property type="match status" value="1"/>
</dbReference>
<dbReference type="HAMAP" id="MF_01659">
    <property type="entry name" value="MenD"/>
    <property type="match status" value="1"/>
</dbReference>
<dbReference type="InterPro" id="IPR004433">
    <property type="entry name" value="MenaQ_synth_MenD"/>
</dbReference>
<dbReference type="InterPro" id="IPR032264">
    <property type="entry name" value="MenD_middle"/>
</dbReference>
<dbReference type="InterPro" id="IPR029061">
    <property type="entry name" value="THDP-binding"/>
</dbReference>
<dbReference type="InterPro" id="IPR012001">
    <property type="entry name" value="Thiamin_PyroP_enz_TPP-bd_dom"/>
</dbReference>
<dbReference type="InterPro" id="IPR011766">
    <property type="entry name" value="TPP_enzyme_TPP-bd"/>
</dbReference>
<dbReference type="NCBIfam" id="TIGR00173">
    <property type="entry name" value="menD"/>
    <property type="match status" value="1"/>
</dbReference>
<dbReference type="PANTHER" id="PTHR42916">
    <property type="entry name" value="2-SUCCINYL-5-ENOLPYRUVYL-6-HYDROXY-3-CYCLOHEXENE-1-CARBOXYLATE SYNTHASE"/>
    <property type="match status" value="1"/>
</dbReference>
<dbReference type="PANTHER" id="PTHR42916:SF1">
    <property type="entry name" value="PROTEIN PHYLLO, CHLOROPLASTIC"/>
    <property type="match status" value="1"/>
</dbReference>
<dbReference type="Pfam" id="PF02775">
    <property type="entry name" value="TPP_enzyme_C"/>
    <property type="match status" value="1"/>
</dbReference>
<dbReference type="Pfam" id="PF16582">
    <property type="entry name" value="TPP_enzyme_M_2"/>
    <property type="match status" value="1"/>
</dbReference>
<dbReference type="Pfam" id="PF02776">
    <property type="entry name" value="TPP_enzyme_N"/>
    <property type="match status" value="1"/>
</dbReference>
<dbReference type="PIRSF" id="PIRSF004983">
    <property type="entry name" value="MenD"/>
    <property type="match status" value="1"/>
</dbReference>
<dbReference type="SUPFAM" id="SSF52518">
    <property type="entry name" value="Thiamin diphosphate-binding fold (THDP-binding)"/>
    <property type="match status" value="2"/>
</dbReference>
<sequence length="567" mass="61805">MSTSVFNRRWAALLLEALTRHGVRHICIAPGSRSTPLTLAAAANPSLVCHTHFDERGLGHLALGLAKASTEPVAVIVTSGTAVANLYPALIEAGLTGERLILLTADRPPELIDCGANQAIRQQGLFASHPTLSVNLPRPTPDISARWLVSTLDSAMAQLQHGALHINCPFAEPLYGGDEQQYADWSASLGDWWQDCHPWLRQTCYPPSLYQPPAQQADWFFWRQKRGVVIAGRMGAQEGRQLTAWAAMLGWPLIGDVLSQTGQPLPCADLWLAHPRAQETLAQAQMVLQFGSSLTSKRLLQWQTACQPQEYWLVDSAPGRLDPANHRGRRIICPVGEWLSRHPAQRRTPWATELAAYSESAQAQVIETLAGQFSEAAVAHQLAELLPDNGQLFVGNSLIVRLIDALGQLPAGYPVYSNRGASGIDGLLSTAAGVQRATAKPTLAIVGDLSALYDLNALALLRQSSAPMVLLVINNNGGQIFSLLPTPEAERQRFYCMPQDVNFEHAAVMFSLGYARPNSWPQLRELVHQCWLRGGTTLIEVQVPPSQGAETLQQLVQQVTLIPQVAP</sequence>
<accession>A9R6J0</accession>
<keyword id="KW-0460">Magnesium</keyword>
<keyword id="KW-0464">Manganese</keyword>
<keyword id="KW-0474">Menaquinone biosynthesis</keyword>
<keyword id="KW-0479">Metal-binding</keyword>
<keyword id="KW-0786">Thiamine pyrophosphate</keyword>
<keyword id="KW-0808">Transferase</keyword>
<evidence type="ECO:0000255" key="1">
    <source>
        <dbReference type="HAMAP-Rule" id="MF_01659"/>
    </source>
</evidence>
<name>MEND_YERPG</name>
<gene>
    <name evidence="1" type="primary">menD</name>
    <name type="ordered locus">YpAngola_A1785</name>
</gene>